<evidence type="ECO:0000255" key="1">
    <source>
        <dbReference type="HAMAP-Rule" id="MF_01364"/>
    </source>
</evidence>
<evidence type="ECO:0000305" key="2"/>
<feature type="chain" id="PRO_1000067970" description="Small ribosomal subunit protein uS14">
    <location>
        <begin position="1"/>
        <end position="61"/>
    </location>
</feature>
<feature type="binding site" evidence="1">
    <location>
        <position position="24"/>
    </location>
    <ligand>
        <name>Zn(2+)</name>
        <dbReference type="ChEBI" id="CHEBI:29105"/>
    </ligand>
</feature>
<feature type="binding site" evidence="1">
    <location>
        <position position="27"/>
    </location>
    <ligand>
        <name>Zn(2+)</name>
        <dbReference type="ChEBI" id="CHEBI:29105"/>
    </ligand>
</feature>
<feature type="binding site" evidence="1">
    <location>
        <position position="40"/>
    </location>
    <ligand>
        <name>Zn(2+)</name>
        <dbReference type="ChEBI" id="CHEBI:29105"/>
    </ligand>
</feature>
<feature type="binding site" evidence="1">
    <location>
        <position position="43"/>
    </location>
    <ligand>
        <name>Zn(2+)</name>
        <dbReference type="ChEBI" id="CHEBI:29105"/>
    </ligand>
</feature>
<gene>
    <name evidence="1" type="primary">rpsZ</name>
    <name evidence="1" type="synonym">rpsN</name>
    <name type="ordered locus">Sfum_1568</name>
</gene>
<keyword id="KW-0479">Metal-binding</keyword>
<keyword id="KW-1185">Reference proteome</keyword>
<keyword id="KW-0687">Ribonucleoprotein</keyword>
<keyword id="KW-0689">Ribosomal protein</keyword>
<keyword id="KW-0694">RNA-binding</keyword>
<keyword id="KW-0699">rRNA-binding</keyword>
<keyword id="KW-0862">Zinc</keyword>
<sequence length="61" mass="6947">MAKKSLIAKAKRTPKFGVRTYNRCPICGRPRAYLRKFGICRICFRSMALKGELPGVVKSSW</sequence>
<dbReference type="EMBL" id="CP000478">
    <property type="protein sequence ID" value="ABK17255.1"/>
    <property type="molecule type" value="Genomic_DNA"/>
</dbReference>
<dbReference type="RefSeq" id="WP_011698425.1">
    <property type="nucleotide sequence ID" value="NC_008554.1"/>
</dbReference>
<dbReference type="SMR" id="A0LIK3"/>
<dbReference type="STRING" id="335543.Sfum_1568"/>
<dbReference type="KEGG" id="sfu:Sfum_1568"/>
<dbReference type="eggNOG" id="COG0199">
    <property type="taxonomic scope" value="Bacteria"/>
</dbReference>
<dbReference type="HOGENOM" id="CLU_139869_3_0_7"/>
<dbReference type="InParanoid" id="A0LIK3"/>
<dbReference type="OrthoDB" id="9810484at2"/>
<dbReference type="Proteomes" id="UP000001784">
    <property type="component" value="Chromosome"/>
</dbReference>
<dbReference type="GO" id="GO:0005737">
    <property type="term" value="C:cytoplasm"/>
    <property type="evidence" value="ECO:0007669"/>
    <property type="project" value="UniProtKB-ARBA"/>
</dbReference>
<dbReference type="GO" id="GO:0015935">
    <property type="term" value="C:small ribosomal subunit"/>
    <property type="evidence" value="ECO:0007669"/>
    <property type="project" value="TreeGrafter"/>
</dbReference>
<dbReference type="GO" id="GO:0019843">
    <property type="term" value="F:rRNA binding"/>
    <property type="evidence" value="ECO:0007669"/>
    <property type="project" value="UniProtKB-UniRule"/>
</dbReference>
<dbReference type="GO" id="GO:0003735">
    <property type="term" value="F:structural constituent of ribosome"/>
    <property type="evidence" value="ECO:0007669"/>
    <property type="project" value="InterPro"/>
</dbReference>
<dbReference type="GO" id="GO:0008270">
    <property type="term" value="F:zinc ion binding"/>
    <property type="evidence" value="ECO:0007669"/>
    <property type="project" value="UniProtKB-UniRule"/>
</dbReference>
<dbReference type="GO" id="GO:0006412">
    <property type="term" value="P:translation"/>
    <property type="evidence" value="ECO:0007669"/>
    <property type="project" value="UniProtKB-UniRule"/>
</dbReference>
<dbReference type="FunFam" id="4.10.830.10:FF:000001">
    <property type="entry name" value="30S ribosomal protein S14 type Z"/>
    <property type="match status" value="1"/>
</dbReference>
<dbReference type="Gene3D" id="4.10.830.10">
    <property type="entry name" value="30s Ribosomal Protein S14, Chain N"/>
    <property type="match status" value="1"/>
</dbReference>
<dbReference type="HAMAP" id="MF_01364_B">
    <property type="entry name" value="Ribosomal_uS14_2_B"/>
    <property type="match status" value="1"/>
</dbReference>
<dbReference type="InterPro" id="IPR001209">
    <property type="entry name" value="Ribosomal_uS14"/>
</dbReference>
<dbReference type="InterPro" id="IPR023053">
    <property type="entry name" value="Ribosomal_uS14_bact"/>
</dbReference>
<dbReference type="InterPro" id="IPR018271">
    <property type="entry name" value="Ribosomal_uS14_CS"/>
</dbReference>
<dbReference type="InterPro" id="IPR043140">
    <property type="entry name" value="Ribosomal_uS14_sf"/>
</dbReference>
<dbReference type="NCBIfam" id="NF005974">
    <property type="entry name" value="PRK08061.1"/>
    <property type="match status" value="1"/>
</dbReference>
<dbReference type="PANTHER" id="PTHR19836">
    <property type="entry name" value="30S RIBOSOMAL PROTEIN S14"/>
    <property type="match status" value="1"/>
</dbReference>
<dbReference type="PANTHER" id="PTHR19836:SF19">
    <property type="entry name" value="SMALL RIBOSOMAL SUBUNIT PROTEIN US14M"/>
    <property type="match status" value="1"/>
</dbReference>
<dbReference type="Pfam" id="PF00253">
    <property type="entry name" value="Ribosomal_S14"/>
    <property type="match status" value="1"/>
</dbReference>
<dbReference type="SUPFAM" id="SSF57716">
    <property type="entry name" value="Glucocorticoid receptor-like (DNA-binding domain)"/>
    <property type="match status" value="1"/>
</dbReference>
<dbReference type="PROSITE" id="PS00527">
    <property type="entry name" value="RIBOSOMAL_S14"/>
    <property type="match status" value="1"/>
</dbReference>
<organism>
    <name type="scientific">Syntrophobacter fumaroxidans (strain DSM 10017 / MPOB)</name>
    <dbReference type="NCBI Taxonomy" id="335543"/>
    <lineage>
        <taxon>Bacteria</taxon>
        <taxon>Pseudomonadati</taxon>
        <taxon>Thermodesulfobacteriota</taxon>
        <taxon>Syntrophobacteria</taxon>
        <taxon>Syntrophobacterales</taxon>
        <taxon>Syntrophobacteraceae</taxon>
        <taxon>Syntrophobacter</taxon>
    </lineage>
</organism>
<name>RS14Z_SYNFM</name>
<proteinExistence type="inferred from homology"/>
<accession>A0LIK3</accession>
<comment type="function">
    <text evidence="1">Binds 16S rRNA, required for the assembly of 30S particles and may also be responsible for determining the conformation of the 16S rRNA at the A site.</text>
</comment>
<comment type="cofactor">
    <cofactor evidence="1">
        <name>Zn(2+)</name>
        <dbReference type="ChEBI" id="CHEBI:29105"/>
    </cofactor>
    <text evidence="1">Binds 1 zinc ion per subunit.</text>
</comment>
<comment type="subunit">
    <text evidence="1">Part of the 30S ribosomal subunit. Contacts proteins S3 and S10.</text>
</comment>
<comment type="similarity">
    <text evidence="1">Belongs to the universal ribosomal protein uS14 family. Zinc-binding uS14 subfamily.</text>
</comment>
<reference key="1">
    <citation type="submission" date="2006-10" db="EMBL/GenBank/DDBJ databases">
        <title>Complete sequence of Syntrophobacter fumaroxidans MPOB.</title>
        <authorList>
            <consortium name="US DOE Joint Genome Institute"/>
            <person name="Copeland A."/>
            <person name="Lucas S."/>
            <person name="Lapidus A."/>
            <person name="Barry K."/>
            <person name="Detter J.C."/>
            <person name="Glavina del Rio T."/>
            <person name="Hammon N."/>
            <person name="Israni S."/>
            <person name="Pitluck S."/>
            <person name="Goltsman E.G."/>
            <person name="Martinez M."/>
            <person name="Schmutz J."/>
            <person name="Larimer F."/>
            <person name="Land M."/>
            <person name="Hauser L."/>
            <person name="Kyrpides N."/>
            <person name="Kim E."/>
            <person name="Boone D.R."/>
            <person name="Brockman F."/>
            <person name="Culley D."/>
            <person name="Ferry J."/>
            <person name="Gunsalus R."/>
            <person name="McInerney M.J."/>
            <person name="Morrison M."/>
            <person name="Plugge C."/>
            <person name="Rohlin L."/>
            <person name="Scholten J."/>
            <person name="Sieber J."/>
            <person name="Stams A.J.M."/>
            <person name="Worm P."/>
            <person name="Henstra A.M."/>
            <person name="Richardson P."/>
        </authorList>
    </citation>
    <scope>NUCLEOTIDE SEQUENCE [LARGE SCALE GENOMIC DNA]</scope>
    <source>
        <strain>DSM 10017 / MPOB</strain>
    </source>
</reference>
<protein>
    <recommendedName>
        <fullName evidence="1">Small ribosomal subunit protein uS14</fullName>
    </recommendedName>
    <alternativeName>
        <fullName evidence="2">30S ribosomal protein S14 type Z</fullName>
    </alternativeName>
</protein>